<dbReference type="EC" id="2.5.1.6" evidence="1"/>
<dbReference type="EMBL" id="CP000687">
    <property type="protein sequence ID" value="ABY69652.1"/>
    <property type="molecule type" value="Genomic_DNA"/>
</dbReference>
<dbReference type="RefSeq" id="WP_005617573.1">
    <property type="nucleotide sequence ID" value="NC_010278.1"/>
</dbReference>
<dbReference type="SMR" id="B0BQ17"/>
<dbReference type="KEGG" id="apj:APJL_1096"/>
<dbReference type="HOGENOM" id="CLU_041802_1_1_6"/>
<dbReference type="UniPathway" id="UPA00315">
    <property type="reaction ID" value="UER00080"/>
</dbReference>
<dbReference type="Proteomes" id="UP000008547">
    <property type="component" value="Chromosome"/>
</dbReference>
<dbReference type="GO" id="GO:0005737">
    <property type="term" value="C:cytoplasm"/>
    <property type="evidence" value="ECO:0007669"/>
    <property type="project" value="UniProtKB-SubCell"/>
</dbReference>
<dbReference type="GO" id="GO:0005524">
    <property type="term" value="F:ATP binding"/>
    <property type="evidence" value="ECO:0007669"/>
    <property type="project" value="UniProtKB-UniRule"/>
</dbReference>
<dbReference type="GO" id="GO:0000287">
    <property type="term" value="F:magnesium ion binding"/>
    <property type="evidence" value="ECO:0007669"/>
    <property type="project" value="UniProtKB-UniRule"/>
</dbReference>
<dbReference type="GO" id="GO:0004478">
    <property type="term" value="F:methionine adenosyltransferase activity"/>
    <property type="evidence" value="ECO:0007669"/>
    <property type="project" value="UniProtKB-UniRule"/>
</dbReference>
<dbReference type="GO" id="GO:0006730">
    <property type="term" value="P:one-carbon metabolic process"/>
    <property type="evidence" value="ECO:0007669"/>
    <property type="project" value="UniProtKB-KW"/>
</dbReference>
<dbReference type="GO" id="GO:0006556">
    <property type="term" value="P:S-adenosylmethionine biosynthetic process"/>
    <property type="evidence" value="ECO:0007669"/>
    <property type="project" value="UniProtKB-UniRule"/>
</dbReference>
<dbReference type="CDD" id="cd18079">
    <property type="entry name" value="S-AdoMet_synt"/>
    <property type="match status" value="1"/>
</dbReference>
<dbReference type="FunFam" id="3.30.300.10:FF:000003">
    <property type="entry name" value="S-adenosylmethionine synthase"/>
    <property type="match status" value="1"/>
</dbReference>
<dbReference type="FunFam" id="3.30.300.10:FF:000004">
    <property type="entry name" value="S-adenosylmethionine synthase"/>
    <property type="match status" value="1"/>
</dbReference>
<dbReference type="Gene3D" id="3.30.300.10">
    <property type="match status" value="3"/>
</dbReference>
<dbReference type="HAMAP" id="MF_00086">
    <property type="entry name" value="S_AdoMet_synth1"/>
    <property type="match status" value="1"/>
</dbReference>
<dbReference type="InterPro" id="IPR022631">
    <property type="entry name" value="ADOMET_SYNTHASE_CS"/>
</dbReference>
<dbReference type="InterPro" id="IPR022630">
    <property type="entry name" value="S-AdoMet_synt_C"/>
</dbReference>
<dbReference type="InterPro" id="IPR022629">
    <property type="entry name" value="S-AdoMet_synt_central"/>
</dbReference>
<dbReference type="InterPro" id="IPR022628">
    <property type="entry name" value="S-AdoMet_synt_N"/>
</dbReference>
<dbReference type="InterPro" id="IPR002133">
    <property type="entry name" value="S-AdoMet_synthetase"/>
</dbReference>
<dbReference type="InterPro" id="IPR022636">
    <property type="entry name" value="S-AdoMet_synthetase_sfam"/>
</dbReference>
<dbReference type="NCBIfam" id="TIGR01034">
    <property type="entry name" value="metK"/>
    <property type="match status" value="1"/>
</dbReference>
<dbReference type="PANTHER" id="PTHR11964">
    <property type="entry name" value="S-ADENOSYLMETHIONINE SYNTHETASE"/>
    <property type="match status" value="1"/>
</dbReference>
<dbReference type="Pfam" id="PF02773">
    <property type="entry name" value="S-AdoMet_synt_C"/>
    <property type="match status" value="1"/>
</dbReference>
<dbReference type="Pfam" id="PF02772">
    <property type="entry name" value="S-AdoMet_synt_M"/>
    <property type="match status" value="1"/>
</dbReference>
<dbReference type="Pfam" id="PF00438">
    <property type="entry name" value="S-AdoMet_synt_N"/>
    <property type="match status" value="1"/>
</dbReference>
<dbReference type="PIRSF" id="PIRSF000497">
    <property type="entry name" value="MAT"/>
    <property type="match status" value="1"/>
</dbReference>
<dbReference type="SUPFAM" id="SSF55973">
    <property type="entry name" value="S-adenosylmethionine synthetase"/>
    <property type="match status" value="3"/>
</dbReference>
<dbReference type="PROSITE" id="PS00376">
    <property type="entry name" value="ADOMET_SYNTHASE_1"/>
    <property type="match status" value="1"/>
</dbReference>
<dbReference type="PROSITE" id="PS00377">
    <property type="entry name" value="ADOMET_SYNTHASE_2"/>
    <property type="match status" value="1"/>
</dbReference>
<keyword id="KW-0067">ATP-binding</keyword>
<keyword id="KW-0963">Cytoplasm</keyword>
<keyword id="KW-0460">Magnesium</keyword>
<keyword id="KW-0479">Metal-binding</keyword>
<keyword id="KW-0547">Nucleotide-binding</keyword>
<keyword id="KW-0554">One-carbon metabolism</keyword>
<keyword id="KW-0630">Potassium</keyword>
<keyword id="KW-0808">Transferase</keyword>
<sequence length="383" mass="41702">MAINLFTSESVSEGHPDKIADQISDAVLDEILKQDPKARVACETYVKTGMALVGGEITTSAWVDIENLTRQVICDIGYTHSDMGFDAHSCAVLNAIGKQSPDINQGVDRADPLEQGAGDQGIMFGYATNETEVLMPAPITYAHRLMEQQAKVRKSGKLDWLRPDAKSQLTFAYENNKIVGIDAVVLSTQHAEHVSQKDLVEGVMEEIIKPVLPSEWLSQNTKYFINPTGRFVIGGPMGDCGLTGRKIIVDTYGGAARHGGGAFSGKDPSKVDRSAAYAARYVAKNIVAAGLADRCEIQLSYAIGVADPTSIMVETFGTGKVSNETLVKLIYQNFDLRPYGLIKMLDLIRPIYRETAAYGHFGREHFPWEQTDKAEALRAGAGL</sequence>
<protein>
    <recommendedName>
        <fullName evidence="1">S-adenosylmethionine synthase</fullName>
        <shortName evidence="1">AdoMet synthase</shortName>
        <ecNumber evidence="1">2.5.1.6</ecNumber>
    </recommendedName>
    <alternativeName>
        <fullName evidence="1">MAT</fullName>
    </alternativeName>
    <alternativeName>
        <fullName evidence="1">Methionine adenosyltransferase</fullName>
    </alternativeName>
</protein>
<reference key="1">
    <citation type="journal article" date="2008" name="PLoS ONE">
        <title>Genome biology of Actinobacillus pleuropneumoniae JL03, an isolate of serotype 3 prevalent in China.</title>
        <authorList>
            <person name="Xu Z."/>
            <person name="Zhou Y."/>
            <person name="Li L."/>
            <person name="Zhou R."/>
            <person name="Xiao S."/>
            <person name="Wan Y."/>
            <person name="Zhang S."/>
            <person name="Wang K."/>
            <person name="Li W."/>
            <person name="Li L."/>
            <person name="Jin H."/>
            <person name="Kang M."/>
            <person name="Dalai B."/>
            <person name="Li T."/>
            <person name="Liu L."/>
            <person name="Cheng Y."/>
            <person name="Zhang L."/>
            <person name="Xu T."/>
            <person name="Zheng H."/>
            <person name="Pu S."/>
            <person name="Wang B."/>
            <person name="Gu W."/>
            <person name="Zhang X.L."/>
            <person name="Zhu G.-F."/>
            <person name="Wang S."/>
            <person name="Zhao G.-P."/>
            <person name="Chen H."/>
        </authorList>
    </citation>
    <scope>NUCLEOTIDE SEQUENCE [LARGE SCALE GENOMIC DNA]</scope>
    <source>
        <strain>JL03</strain>
    </source>
</reference>
<feature type="chain" id="PRO_1000093019" description="S-adenosylmethionine synthase">
    <location>
        <begin position="1"/>
        <end position="383"/>
    </location>
</feature>
<feature type="region of interest" description="Flexible loop" evidence="1">
    <location>
        <begin position="99"/>
        <end position="109"/>
    </location>
</feature>
<feature type="binding site" description="in other chain" evidence="1">
    <location>
        <position position="15"/>
    </location>
    <ligand>
        <name>ATP</name>
        <dbReference type="ChEBI" id="CHEBI:30616"/>
        <note>ligand shared between two neighboring subunits</note>
    </ligand>
</feature>
<feature type="binding site" evidence="1">
    <location>
        <position position="17"/>
    </location>
    <ligand>
        <name>Mg(2+)</name>
        <dbReference type="ChEBI" id="CHEBI:18420"/>
    </ligand>
</feature>
<feature type="binding site" evidence="1">
    <location>
        <position position="43"/>
    </location>
    <ligand>
        <name>K(+)</name>
        <dbReference type="ChEBI" id="CHEBI:29103"/>
    </ligand>
</feature>
<feature type="binding site" description="in other chain" evidence="1">
    <location>
        <position position="56"/>
    </location>
    <ligand>
        <name>L-methionine</name>
        <dbReference type="ChEBI" id="CHEBI:57844"/>
        <note>ligand shared between two neighboring subunits</note>
    </ligand>
</feature>
<feature type="binding site" description="in other chain" evidence="1">
    <location>
        <position position="99"/>
    </location>
    <ligand>
        <name>L-methionine</name>
        <dbReference type="ChEBI" id="CHEBI:57844"/>
        <note>ligand shared between two neighboring subunits</note>
    </ligand>
</feature>
<feature type="binding site" description="in other chain" evidence="1">
    <location>
        <begin position="164"/>
        <end position="166"/>
    </location>
    <ligand>
        <name>ATP</name>
        <dbReference type="ChEBI" id="CHEBI:30616"/>
        <note>ligand shared between two neighboring subunits</note>
    </ligand>
</feature>
<feature type="binding site" description="in other chain" evidence="1">
    <location>
        <begin position="230"/>
        <end position="231"/>
    </location>
    <ligand>
        <name>ATP</name>
        <dbReference type="ChEBI" id="CHEBI:30616"/>
        <note>ligand shared between two neighboring subunits</note>
    </ligand>
</feature>
<feature type="binding site" evidence="1">
    <location>
        <position position="239"/>
    </location>
    <ligand>
        <name>ATP</name>
        <dbReference type="ChEBI" id="CHEBI:30616"/>
        <note>ligand shared between two neighboring subunits</note>
    </ligand>
</feature>
<feature type="binding site" evidence="1">
    <location>
        <position position="239"/>
    </location>
    <ligand>
        <name>L-methionine</name>
        <dbReference type="ChEBI" id="CHEBI:57844"/>
        <note>ligand shared between two neighboring subunits</note>
    </ligand>
</feature>
<feature type="binding site" description="in other chain" evidence="1">
    <location>
        <begin position="245"/>
        <end position="246"/>
    </location>
    <ligand>
        <name>ATP</name>
        <dbReference type="ChEBI" id="CHEBI:30616"/>
        <note>ligand shared between two neighboring subunits</note>
    </ligand>
</feature>
<feature type="binding site" evidence="1">
    <location>
        <position position="262"/>
    </location>
    <ligand>
        <name>ATP</name>
        <dbReference type="ChEBI" id="CHEBI:30616"/>
        <note>ligand shared between two neighboring subunits</note>
    </ligand>
</feature>
<feature type="binding site" evidence="1">
    <location>
        <position position="266"/>
    </location>
    <ligand>
        <name>ATP</name>
        <dbReference type="ChEBI" id="CHEBI:30616"/>
        <note>ligand shared between two neighboring subunits</note>
    </ligand>
</feature>
<feature type="binding site" description="in other chain" evidence="1">
    <location>
        <position position="270"/>
    </location>
    <ligand>
        <name>L-methionine</name>
        <dbReference type="ChEBI" id="CHEBI:57844"/>
        <note>ligand shared between two neighboring subunits</note>
    </ligand>
</feature>
<evidence type="ECO:0000255" key="1">
    <source>
        <dbReference type="HAMAP-Rule" id="MF_00086"/>
    </source>
</evidence>
<name>METK_ACTPJ</name>
<gene>
    <name evidence="1" type="primary">metK</name>
    <name type="ordered locus">APJL_1096</name>
</gene>
<accession>B0BQ17</accession>
<proteinExistence type="inferred from homology"/>
<comment type="function">
    <text evidence="1">Catalyzes the formation of S-adenosylmethionine (AdoMet) from methionine and ATP. The overall synthetic reaction is composed of two sequential steps, AdoMet formation and the subsequent tripolyphosphate hydrolysis which occurs prior to release of AdoMet from the enzyme.</text>
</comment>
<comment type="catalytic activity">
    <reaction evidence="1">
        <text>L-methionine + ATP + H2O = S-adenosyl-L-methionine + phosphate + diphosphate</text>
        <dbReference type="Rhea" id="RHEA:21080"/>
        <dbReference type="ChEBI" id="CHEBI:15377"/>
        <dbReference type="ChEBI" id="CHEBI:30616"/>
        <dbReference type="ChEBI" id="CHEBI:33019"/>
        <dbReference type="ChEBI" id="CHEBI:43474"/>
        <dbReference type="ChEBI" id="CHEBI:57844"/>
        <dbReference type="ChEBI" id="CHEBI:59789"/>
        <dbReference type="EC" id="2.5.1.6"/>
    </reaction>
</comment>
<comment type="cofactor">
    <cofactor evidence="1">
        <name>Mg(2+)</name>
        <dbReference type="ChEBI" id="CHEBI:18420"/>
    </cofactor>
    <text evidence="1">Binds 2 divalent ions per subunit.</text>
</comment>
<comment type="cofactor">
    <cofactor evidence="1">
        <name>K(+)</name>
        <dbReference type="ChEBI" id="CHEBI:29103"/>
    </cofactor>
    <text evidence="1">Binds 1 potassium ion per subunit.</text>
</comment>
<comment type="pathway">
    <text evidence="1">Amino-acid biosynthesis; S-adenosyl-L-methionine biosynthesis; S-adenosyl-L-methionine from L-methionine: step 1/1.</text>
</comment>
<comment type="subunit">
    <text evidence="1">Homotetramer; dimer of dimers.</text>
</comment>
<comment type="subcellular location">
    <subcellularLocation>
        <location evidence="1">Cytoplasm</location>
    </subcellularLocation>
</comment>
<comment type="similarity">
    <text evidence="1">Belongs to the AdoMet synthase family.</text>
</comment>
<organism>
    <name type="scientific">Actinobacillus pleuropneumoniae serotype 3 (strain JL03)</name>
    <dbReference type="NCBI Taxonomy" id="434271"/>
    <lineage>
        <taxon>Bacteria</taxon>
        <taxon>Pseudomonadati</taxon>
        <taxon>Pseudomonadota</taxon>
        <taxon>Gammaproteobacteria</taxon>
        <taxon>Pasteurellales</taxon>
        <taxon>Pasteurellaceae</taxon>
        <taxon>Actinobacillus</taxon>
    </lineage>
</organism>